<feature type="chain" id="PRO_0000408073" description="Putative antitoxin VapB29">
    <location>
        <begin position="1"/>
        <end position="75"/>
    </location>
</feature>
<gene>
    <name type="primary">vapB29</name>
    <name type="ordered locus">Rv0616A</name>
</gene>
<reference key="1">
    <citation type="journal article" date="1998" name="Nature">
        <title>Deciphering the biology of Mycobacterium tuberculosis from the complete genome sequence.</title>
        <authorList>
            <person name="Cole S.T."/>
            <person name="Brosch R."/>
            <person name="Parkhill J."/>
            <person name="Garnier T."/>
            <person name="Churcher C.M."/>
            <person name="Harris D.E."/>
            <person name="Gordon S.V."/>
            <person name="Eiglmeier K."/>
            <person name="Gas S."/>
            <person name="Barry C.E. III"/>
            <person name="Tekaia F."/>
            <person name="Badcock K."/>
            <person name="Basham D."/>
            <person name="Brown D."/>
            <person name="Chillingworth T."/>
            <person name="Connor R."/>
            <person name="Davies R.M."/>
            <person name="Devlin K."/>
            <person name="Feltwell T."/>
            <person name="Gentles S."/>
            <person name="Hamlin N."/>
            <person name="Holroyd S."/>
            <person name="Hornsby T."/>
            <person name="Jagels K."/>
            <person name="Krogh A."/>
            <person name="McLean J."/>
            <person name="Moule S."/>
            <person name="Murphy L.D."/>
            <person name="Oliver S."/>
            <person name="Osborne J."/>
            <person name="Quail M.A."/>
            <person name="Rajandream M.A."/>
            <person name="Rogers J."/>
            <person name="Rutter S."/>
            <person name="Seeger K."/>
            <person name="Skelton S."/>
            <person name="Squares S."/>
            <person name="Squares R."/>
            <person name="Sulston J.E."/>
            <person name="Taylor K."/>
            <person name="Whitehead S."/>
            <person name="Barrell B.G."/>
        </authorList>
    </citation>
    <scope>NUCLEOTIDE SEQUENCE [LARGE SCALE GENOMIC DNA]</scope>
    <source>
        <strain>ATCC 25618 / H37Rv</strain>
    </source>
</reference>
<reference key="2">
    <citation type="journal article" date="2009" name="PLoS Genet.">
        <title>Comprehensive functional analysis of Mycobacterium tuberculosis toxin-antitoxin systems: implications for pathogenesis, stress responses, and evolution.</title>
        <authorList>
            <person name="Ramage H.R."/>
            <person name="Connolly L.E."/>
            <person name="Cox J.S."/>
        </authorList>
    </citation>
    <scope>POSSIBLE FUNCTION</scope>
    <source>
        <strain>ATCC 35801 / TMC 107 / Erdman</strain>
    </source>
</reference>
<reference key="3">
    <citation type="journal article" date="2011" name="Mol. Cell. Proteomics">
        <title>Proteogenomic analysis of Mycobacterium tuberculosis by high resolution mass spectrometry.</title>
        <authorList>
            <person name="Kelkar D.S."/>
            <person name="Kumar D."/>
            <person name="Kumar P."/>
            <person name="Balakrishnan L."/>
            <person name="Muthusamy B."/>
            <person name="Yadav A.K."/>
            <person name="Shrivastava P."/>
            <person name="Marimuthu A."/>
            <person name="Anand S."/>
            <person name="Sundaram H."/>
            <person name="Kingsbury R."/>
            <person name="Harsha H.C."/>
            <person name="Nair B."/>
            <person name="Prasad T.S."/>
            <person name="Chauhan D.S."/>
            <person name="Katoch K."/>
            <person name="Katoch V.M."/>
            <person name="Kumar P."/>
            <person name="Chaerkady R."/>
            <person name="Ramachandran S."/>
            <person name="Dash D."/>
            <person name="Pandey A."/>
        </authorList>
    </citation>
    <scope>IDENTIFICATION BY MASS SPECTROMETRY [LARGE SCALE ANALYSIS]</scope>
    <source>
        <strain>ATCC 25618 / H37Rv</strain>
    </source>
</reference>
<dbReference type="EMBL" id="AL123456">
    <property type="protein sequence ID" value="CCP43357.1"/>
    <property type="molecule type" value="Genomic_DNA"/>
</dbReference>
<dbReference type="RefSeq" id="WP_003403213.1">
    <property type="nucleotide sequence ID" value="NZ_NVQJ01000033.1"/>
</dbReference>
<dbReference type="RefSeq" id="YP_007409270.1">
    <property type="nucleotide sequence ID" value="NC_000962.3"/>
</dbReference>
<dbReference type="SMR" id="P9WJ37"/>
<dbReference type="STRING" id="83332.Rv0616A"/>
<dbReference type="PaxDb" id="83332-Rv0616A"/>
<dbReference type="GeneID" id="14515850"/>
<dbReference type="KEGG" id="mtu:Rv0616A"/>
<dbReference type="KEGG" id="mtv:RVBD_0616A"/>
<dbReference type="TubercuList" id="Rv0616A"/>
<dbReference type="eggNOG" id="ENOG5033ETW">
    <property type="taxonomic scope" value="Bacteria"/>
</dbReference>
<dbReference type="InParanoid" id="P9WJ37"/>
<dbReference type="OrthoDB" id="3259334at2"/>
<dbReference type="Proteomes" id="UP000001584">
    <property type="component" value="Chromosome"/>
</dbReference>
<dbReference type="GO" id="GO:0006355">
    <property type="term" value="P:regulation of DNA-templated transcription"/>
    <property type="evidence" value="ECO:0007669"/>
    <property type="project" value="InterPro"/>
</dbReference>
<dbReference type="InterPro" id="IPR010985">
    <property type="entry name" value="Ribbon_hlx_hlx"/>
</dbReference>
<dbReference type="SUPFAM" id="SSF47598">
    <property type="entry name" value="Ribbon-helix-helix"/>
    <property type="match status" value="1"/>
</dbReference>
<protein>
    <recommendedName>
        <fullName>Putative antitoxin VapB29</fullName>
    </recommendedName>
</protein>
<keyword id="KW-1185">Reference proteome</keyword>
<keyword id="KW-1277">Toxin-antitoxin system</keyword>
<sequence length="75" mass="8195">MRTTIDLPQDLHKQALAIARDTHRTLSETVADLMRRGLAANRPTALSSDPRTGLPLVSVGTVVTSEDVRSLEDEQ</sequence>
<evidence type="ECO:0000305" key="1">
    <source>
    </source>
</evidence>
<proteinExistence type="evidence at protein level"/>
<name>VPB29_MYCTU</name>
<comment type="function">
    <text evidence="1">Possibly the antitoxic component of a type II toxin-antitoxin (TA) system. Its cognate toxin is VapC29.</text>
</comment>
<organism>
    <name type="scientific">Mycobacterium tuberculosis (strain ATCC 25618 / H37Rv)</name>
    <dbReference type="NCBI Taxonomy" id="83332"/>
    <lineage>
        <taxon>Bacteria</taxon>
        <taxon>Bacillati</taxon>
        <taxon>Actinomycetota</taxon>
        <taxon>Actinomycetes</taxon>
        <taxon>Mycobacteriales</taxon>
        <taxon>Mycobacteriaceae</taxon>
        <taxon>Mycobacterium</taxon>
        <taxon>Mycobacterium tuberculosis complex</taxon>
    </lineage>
</organism>
<accession>P9WJ37</accession>
<accession>F2GMR3</accession>
<accession>P0CW34</accession>
<accession>Q8VKH5</accession>